<keyword id="KW-0004">4Fe-4S</keyword>
<keyword id="KW-0408">Iron</keyword>
<keyword id="KW-0411">Iron-sulfur</keyword>
<keyword id="KW-0414">Isoprene biosynthesis</keyword>
<keyword id="KW-0479">Metal-binding</keyword>
<keyword id="KW-0560">Oxidoreductase</keyword>
<accession>A1TZQ0</accession>
<gene>
    <name evidence="1" type="primary">ispG</name>
    <name type="ordered locus">Maqu_1127</name>
</gene>
<name>ISPG_MARN8</name>
<proteinExistence type="inferred from homology"/>
<evidence type="ECO:0000255" key="1">
    <source>
        <dbReference type="HAMAP-Rule" id="MF_00159"/>
    </source>
</evidence>
<organism>
    <name type="scientific">Marinobacter nauticus (strain ATCC 700491 / DSM 11845 / VT8)</name>
    <name type="common">Marinobacter aquaeolei</name>
    <dbReference type="NCBI Taxonomy" id="351348"/>
    <lineage>
        <taxon>Bacteria</taxon>
        <taxon>Pseudomonadati</taxon>
        <taxon>Pseudomonadota</taxon>
        <taxon>Gammaproteobacteria</taxon>
        <taxon>Pseudomonadales</taxon>
        <taxon>Marinobacteraceae</taxon>
        <taxon>Marinobacter</taxon>
    </lineage>
</organism>
<dbReference type="EC" id="1.17.7.3" evidence="1"/>
<dbReference type="EMBL" id="CP000514">
    <property type="protein sequence ID" value="ABM18219.1"/>
    <property type="molecule type" value="Genomic_DNA"/>
</dbReference>
<dbReference type="RefSeq" id="WP_011784636.1">
    <property type="nucleotide sequence ID" value="NC_008740.1"/>
</dbReference>
<dbReference type="SMR" id="A1TZQ0"/>
<dbReference type="STRING" id="351348.Maqu_1127"/>
<dbReference type="GeneID" id="31821559"/>
<dbReference type="KEGG" id="maq:Maqu_1127"/>
<dbReference type="eggNOG" id="COG0821">
    <property type="taxonomic scope" value="Bacteria"/>
</dbReference>
<dbReference type="HOGENOM" id="CLU_042258_0_0_6"/>
<dbReference type="OrthoDB" id="9803214at2"/>
<dbReference type="UniPathway" id="UPA00056">
    <property type="reaction ID" value="UER00096"/>
</dbReference>
<dbReference type="Proteomes" id="UP000000998">
    <property type="component" value="Chromosome"/>
</dbReference>
<dbReference type="GO" id="GO:0051539">
    <property type="term" value="F:4 iron, 4 sulfur cluster binding"/>
    <property type="evidence" value="ECO:0007669"/>
    <property type="project" value="UniProtKB-UniRule"/>
</dbReference>
<dbReference type="GO" id="GO:0046429">
    <property type="term" value="F:4-hydroxy-3-methylbut-2-en-1-yl diphosphate synthase activity (ferredoxin)"/>
    <property type="evidence" value="ECO:0007669"/>
    <property type="project" value="UniProtKB-UniRule"/>
</dbReference>
<dbReference type="GO" id="GO:0141197">
    <property type="term" value="F:4-hydroxy-3-methylbut-2-enyl-diphosphate synthase activity (flavodoxin)"/>
    <property type="evidence" value="ECO:0007669"/>
    <property type="project" value="UniProtKB-EC"/>
</dbReference>
<dbReference type="GO" id="GO:0005506">
    <property type="term" value="F:iron ion binding"/>
    <property type="evidence" value="ECO:0007669"/>
    <property type="project" value="InterPro"/>
</dbReference>
<dbReference type="GO" id="GO:0019288">
    <property type="term" value="P:isopentenyl diphosphate biosynthetic process, methylerythritol 4-phosphate pathway"/>
    <property type="evidence" value="ECO:0007669"/>
    <property type="project" value="UniProtKB-UniRule"/>
</dbReference>
<dbReference type="GO" id="GO:0016114">
    <property type="term" value="P:terpenoid biosynthetic process"/>
    <property type="evidence" value="ECO:0007669"/>
    <property type="project" value="InterPro"/>
</dbReference>
<dbReference type="FunFam" id="3.20.20.20:FF:000001">
    <property type="entry name" value="4-hydroxy-3-methylbut-2-en-1-yl diphosphate synthase (flavodoxin)"/>
    <property type="match status" value="1"/>
</dbReference>
<dbReference type="Gene3D" id="3.20.20.20">
    <property type="entry name" value="Dihydropteroate synthase-like"/>
    <property type="match status" value="1"/>
</dbReference>
<dbReference type="Gene3D" id="3.30.413.10">
    <property type="entry name" value="Sulfite Reductase Hemoprotein, domain 1"/>
    <property type="match status" value="1"/>
</dbReference>
<dbReference type="HAMAP" id="MF_00159">
    <property type="entry name" value="IspG"/>
    <property type="match status" value="1"/>
</dbReference>
<dbReference type="InterPro" id="IPR011005">
    <property type="entry name" value="Dihydropteroate_synth-like_sf"/>
</dbReference>
<dbReference type="InterPro" id="IPR016425">
    <property type="entry name" value="IspG_bac"/>
</dbReference>
<dbReference type="InterPro" id="IPR004588">
    <property type="entry name" value="IspG_bac-typ"/>
</dbReference>
<dbReference type="InterPro" id="IPR045854">
    <property type="entry name" value="NO2/SO3_Rdtase_4Fe4S_sf"/>
</dbReference>
<dbReference type="NCBIfam" id="TIGR00612">
    <property type="entry name" value="ispG_gcpE"/>
    <property type="match status" value="1"/>
</dbReference>
<dbReference type="NCBIfam" id="NF001540">
    <property type="entry name" value="PRK00366.1"/>
    <property type="match status" value="1"/>
</dbReference>
<dbReference type="PANTHER" id="PTHR30454">
    <property type="entry name" value="4-HYDROXY-3-METHYLBUT-2-EN-1-YL DIPHOSPHATE SYNTHASE"/>
    <property type="match status" value="1"/>
</dbReference>
<dbReference type="PANTHER" id="PTHR30454:SF0">
    <property type="entry name" value="4-HYDROXY-3-METHYLBUT-2-EN-1-YL DIPHOSPHATE SYNTHASE (FERREDOXIN), CHLOROPLASTIC"/>
    <property type="match status" value="1"/>
</dbReference>
<dbReference type="Pfam" id="PF04551">
    <property type="entry name" value="GcpE"/>
    <property type="match status" value="1"/>
</dbReference>
<dbReference type="PIRSF" id="PIRSF004640">
    <property type="entry name" value="IspG"/>
    <property type="match status" value="1"/>
</dbReference>
<dbReference type="SUPFAM" id="SSF51717">
    <property type="entry name" value="Dihydropteroate synthetase-like"/>
    <property type="match status" value="1"/>
</dbReference>
<dbReference type="SUPFAM" id="SSF56014">
    <property type="entry name" value="Nitrite and sulphite reductase 4Fe-4S domain-like"/>
    <property type="match status" value="1"/>
</dbReference>
<feature type="chain" id="PRO_1000011482" description="4-hydroxy-3-methylbut-2-en-1-yl diphosphate synthase (flavodoxin)">
    <location>
        <begin position="1"/>
        <end position="372"/>
    </location>
</feature>
<feature type="binding site" evidence="1">
    <location>
        <position position="270"/>
    </location>
    <ligand>
        <name>[4Fe-4S] cluster</name>
        <dbReference type="ChEBI" id="CHEBI:49883"/>
    </ligand>
</feature>
<feature type="binding site" evidence="1">
    <location>
        <position position="273"/>
    </location>
    <ligand>
        <name>[4Fe-4S] cluster</name>
        <dbReference type="ChEBI" id="CHEBI:49883"/>
    </ligand>
</feature>
<feature type="binding site" evidence="1">
    <location>
        <position position="305"/>
    </location>
    <ligand>
        <name>[4Fe-4S] cluster</name>
        <dbReference type="ChEBI" id="CHEBI:49883"/>
    </ligand>
</feature>
<feature type="binding site" evidence="1">
    <location>
        <position position="312"/>
    </location>
    <ligand>
        <name>[4Fe-4S] cluster</name>
        <dbReference type="ChEBI" id="CHEBI:49883"/>
    </ligand>
</feature>
<sequence>MKQESPIKRRKSRQIMVGNVPVGGDAPIAVQSMTNTNTCDVDATVTQIKAIQEAGADIVRVSVPSMEAAEAFGKIRQQVSLPLVADIHFDYKIALRVAELGVDCLRINPGNIGRDDRVSAVISAARDRNIPIRIGVNAGSLEKALQRKYGEPTPEALVESAMRHIDILDKHDFQDFKVSLKASEVFMTVAAYRLIASQIEQPLHLGITEAGGFRSGTVKSSIGLGMLLMDGIGDTIRVSLAADPVQEIKVGFDILKSLRLRSRGINFIACPSCSRQNFDVIQTMNDLEARLEDVNTSMDVAIIGCIVNGPGEAKVADIGLTGGTPKNLFYMAGKPNQKLDNATLVDDLERLIREEVSRREDQDSAVIAKSSD</sequence>
<reference key="1">
    <citation type="journal article" date="2011" name="Appl. Environ. Microbiol.">
        <title>Genomic potential of Marinobacter aquaeolei, a biogeochemical 'opportunitroph'.</title>
        <authorList>
            <person name="Singer E."/>
            <person name="Webb E.A."/>
            <person name="Nelson W.C."/>
            <person name="Heidelberg J.F."/>
            <person name="Ivanova N."/>
            <person name="Pati A."/>
            <person name="Edwards K.J."/>
        </authorList>
    </citation>
    <scope>NUCLEOTIDE SEQUENCE [LARGE SCALE GENOMIC DNA]</scope>
    <source>
        <strain>ATCC 700491 / DSM 11845 / VT8</strain>
    </source>
</reference>
<comment type="function">
    <text evidence="1">Converts 2C-methyl-D-erythritol 2,4-cyclodiphosphate (ME-2,4cPP) into 1-hydroxy-2-methyl-2-(E)-butenyl 4-diphosphate.</text>
</comment>
<comment type="catalytic activity">
    <reaction evidence="1">
        <text>(2E)-4-hydroxy-3-methylbut-2-enyl diphosphate + oxidized [flavodoxin] + H2O + 2 H(+) = 2-C-methyl-D-erythritol 2,4-cyclic diphosphate + reduced [flavodoxin]</text>
        <dbReference type="Rhea" id="RHEA:43604"/>
        <dbReference type="Rhea" id="RHEA-COMP:10622"/>
        <dbReference type="Rhea" id="RHEA-COMP:10623"/>
        <dbReference type="ChEBI" id="CHEBI:15377"/>
        <dbReference type="ChEBI" id="CHEBI:15378"/>
        <dbReference type="ChEBI" id="CHEBI:57618"/>
        <dbReference type="ChEBI" id="CHEBI:58210"/>
        <dbReference type="ChEBI" id="CHEBI:58483"/>
        <dbReference type="ChEBI" id="CHEBI:128753"/>
        <dbReference type="EC" id="1.17.7.3"/>
    </reaction>
</comment>
<comment type="cofactor">
    <cofactor evidence="1">
        <name>[4Fe-4S] cluster</name>
        <dbReference type="ChEBI" id="CHEBI:49883"/>
    </cofactor>
    <text evidence="1">Binds 1 [4Fe-4S] cluster.</text>
</comment>
<comment type="pathway">
    <text evidence="1">Isoprenoid biosynthesis; isopentenyl diphosphate biosynthesis via DXP pathway; isopentenyl diphosphate from 1-deoxy-D-xylulose 5-phosphate: step 5/6.</text>
</comment>
<comment type="similarity">
    <text evidence="1">Belongs to the IspG family.</text>
</comment>
<protein>
    <recommendedName>
        <fullName evidence="1">4-hydroxy-3-methylbut-2-en-1-yl diphosphate synthase (flavodoxin)</fullName>
        <ecNumber evidence="1">1.17.7.3</ecNumber>
    </recommendedName>
    <alternativeName>
        <fullName evidence="1">1-hydroxy-2-methyl-2-(E)-butenyl 4-diphosphate synthase</fullName>
    </alternativeName>
</protein>